<protein>
    <recommendedName>
        <fullName evidence="1">Bifunctional protein GlmU</fullName>
    </recommendedName>
    <domain>
        <recommendedName>
            <fullName evidence="1">UDP-N-acetylglucosamine pyrophosphorylase</fullName>
            <ecNumber evidence="1">2.7.7.23</ecNumber>
        </recommendedName>
        <alternativeName>
            <fullName evidence="1">N-acetylglucosamine-1-phosphate uridyltransferase</fullName>
        </alternativeName>
    </domain>
    <domain>
        <recommendedName>
            <fullName evidence="1">Glucosamine-1-phosphate N-acetyltransferase</fullName>
            <ecNumber evidence="1">2.3.1.157</ecNumber>
        </recommendedName>
    </domain>
</protein>
<accession>B5BIN3</accession>
<evidence type="ECO:0000255" key="1">
    <source>
        <dbReference type="HAMAP-Rule" id="MF_01631"/>
    </source>
</evidence>
<dbReference type="EC" id="2.7.7.23" evidence="1"/>
<dbReference type="EC" id="2.3.1.157" evidence="1"/>
<dbReference type="EMBL" id="FM200053">
    <property type="protein sequence ID" value="CAR61731.1"/>
    <property type="molecule type" value="Genomic_DNA"/>
</dbReference>
<dbReference type="RefSeq" id="WP_000934850.1">
    <property type="nucleotide sequence ID" value="NC_011147.1"/>
</dbReference>
<dbReference type="SMR" id="B5BIN3"/>
<dbReference type="KEGG" id="sek:SSPA3456"/>
<dbReference type="HOGENOM" id="CLU_029499_15_2_6"/>
<dbReference type="UniPathway" id="UPA00113">
    <property type="reaction ID" value="UER00532"/>
</dbReference>
<dbReference type="UniPathway" id="UPA00113">
    <property type="reaction ID" value="UER00533"/>
</dbReference>
<dbReference type="UniPathway" id="UPA00973"/>
<dbReference type="Proteomes" id="UP000001869">
    <property type="component" value="Chromosome"/>
</dbReference>
<dbReference type="GO" id="GO:0005737">
    <property type="term" value="C:cytoplasm"/>
    <property type="evidence" value="ECO:0007669"/>
    <property type="project" value="UniProtKB-SubCell"/>
</dbReference>
<dbReference type="GO" id="GO:0016020">
    <property type="term" value="C:membrane"/>
    <property type="evidence" value="ECO:0007669"/>
    <property type="project" value="GOC"/>
</dbReference>
<dbReference type="GO" id="GO:0019134">
    <property type="term" value="F:glucosamine-1-phosphate N-acetyltransferase activity"/>
    <property type="evidence" value="ECO:0007669"/>
    <property type="project" value="UniProtKB-UniRule"/>
</dbReference>
<dbReference type="GO" id="GO:0000287">
    <property type="term" value="F:magnesium ion binding"/>
    <property type="evidence" value="ECO:0007669"/>
    <property type="project" value="UniProtKB-UniRule"/>
</dbReference>
<dbReference type="GO" id="GO:0003977">
    <property type="term" value="F:UDP-N-acetylglucosamine diphosphorylase activity"/>
    <property type="evidence" value="ECO:0007669"/>
    <property type="project" value="UniProtKB-UniRule"/>
</dbReference>
<dbReference type="GO" id="GO:0000902">
    <property type="term" value="P:cell morphogenesis"/>
    <property type="evidence" value="ECO:0007669"/>
    <property type="project" value="UniProtKB-UniRule"/>
</dbReference>
<dbReference type="GO" id="GO:0071555">
    <property type="term" value="P:cell wall organization"/>
    <property type="evidence" value="ECO:0007669"/>
    <property type="project" value="UniProtKB-KW"/>
</dbReference>
<dbReference type="GO" id="GO:0009245">
    <property type="term" value="P:lipid A biosynthetic process"/>
    <property type="evidence" value="ECO:0007669"/>
    <property type="project" value="UniProtKB-UniRule"/>
</dbReference>
<dbReference type="GO" id="GO:0009252">
    <property type="term" value="P:peptidoglycan biosynthetic process"/>
    <property type="evidence" value="ECO:0007669"/>
    <property type="project" value="UniProtKB-UniRule"/>
</dbReference>
<dbReference type="GO" id="GO:0008360">
    <property type="term" value="P:regulation of cell shape"/>
    <property type="evidence" value="ECO:0007669"/>
    <property type="project" value="UniProtKB-KW"/>
</dbReference>
<dbReference type="GO" id="GO:0006048">
    <property type="term" value="P:UDP-N-acetylglucosamine biosynthetic process"/>
    <property type="evidence" value="ECO:0007669"/>
    <property type="project" value="UniProtKB-UniPathway"/>
</dbReference>
<dbReference type="CDD" id="cd02540">
    <property type="entry name" value="GT2_GlmU_N_bac"/>
    <property type="match status" value="1"/>
</dbReference>
<dbReference type="CDD" id="cd03353">
    <property type="entry name" value="LbH_GlmU_C"/>
    <property type="match status" value="1"/>
</dbReference>
<dbReference type="FunFam" id="2.160.10.10:FF:000011">
    <property type="entry name" value="Bifunctional protein GlmU"/>
    <property type="match status" value="1"/>
</dbReference>
<dbReference type="FunFam" id="3.90.550.10:FF:000006">
    <property type="entry name" value="Bifunctional protein GlmU"/>
    <property type="match status" value="1"/>
</dbReference>
<dbReference type="Gene3D" id="2.160.10.10">
    <property type="entry name" value="Hexapeptide repeat proteins"/>
    <property type="match status" value="1"/>
</dbReference>
<dbReference type="Gene3D" id="3.90.550.10">
    <property type="entry name" value="Spore Coat Polysaccharide Biosynthesis Protein SpsA, Chain A"/>
    <property type="match status" value="1"/>
</dbReference>
<dbReference type="HAMAP" id="MF_01631">
    <property type="entry name" value="GlmU"/>
    <property type="match status" value="1"/>
</dbReference>
<dbReference type="InterPro" id="IPR005882">
    <property type="entry name" value="Bifunctional_GlmU"/>
</dbReference>
<dbReference type="InterPro" id="IPR050065">
    <property type="entry name" value="GlmU-like"/>
</dbReference>
<dbReference type="InterPro" id="IPR038009">
    <property type="entry name" value="GlmU_C_LbH"/>
</dbReference>
<dbReference type="InterPro" id="IPR001451">
    <property type="entry name" value="Hexapep"/>
</dbReference>
<dbReference type="InterPro" id="IPR018357">
    <property type="entry name" value="Hexapep_transf_CS"/>
</dbReference>
<dbReference type="InterPro" id="IPR025877">
    <property type="entry name" value="MobA-like_NTP_Trfase"/>
</dbReference>
<dbReference type="InterPro" id="IPR029044">
    <property type="entry name" value="Nucleotide-diphossugar_trans"/>
</dbReference>
<dbReference type="InterPro" id="IPR011004">
    <property type="entry name" value="Trimer_LpxA-like_sf"/>
</dbReference>
<dbReference type="NCBIfam" id="TIGR01173">
    <property type="entry name" value="glmU"/>
    <property type="match status" value="1"/>
</dbReference>
<dbReference type="NCBIfam" id="NF006986">
    <property type="entry name" value="PRK09451.1"/>
    <property type="match status" value="1"/>
</dbReference>
<dbReference type="PANTHER" id="PTHR43584:SF3">
    <property type="entry name" value="BIFUNCTIONAL PROTEIN GLMU"/>
    <property type="match status" value="1"/>
</dbReference>
<dbReference type="PANTHER" id="PTHR43584">
    <property type="entry name" value="NUCLEOTIDYL TRANSFERASE"/>
    <property type="match status" value="1"/>
</dbReference>
<dbReference type="Pfam" id="PF00132">
    <property type="entry name" value="Hexapep"/>
    <property type="match status" value="1"/>
</dbReference>
<dbReference type="Pfam" id="PF12804">
    <property type="entry name" value="NTP_transf_3"/>
    <property type="match status" value="1"/>
</dbReference>
<dbReference type="SUPFAM" id="SSF53448">
    <property type="entry name" value="Nucleotide-diphospho-sugar transferases"/>
    <property type="match status" value="1"/>
</dbReference>
<dbReference type="SUPFAM" id="SSF51161">
    <property type="entry name" value="Trimeric LpxA-like enzymes"/>
    <property type="match status" value="1"/>
</dbReference>
<dbReference type="PROSITE" id="PS00101">
    <property type="entry name" value="HEXAPEP_TRANSFERASES"/>
    <property type="match status" value="1"/>
</dbReference>
<sequence>MLNSAMSVVILAAGKGTRMYSDIPKVLHTLAGKPMVQHVIDAATKLGAAQVHLVYGHGGELLKQTLKDDKLNWVLQAEQLGTGHAMQQAAPFFSDDEDILMLYGDVPLISVETLQRLRDAKPQGGIGLLTVKLDDPSGYGRITRENGKVTGIVEHKDATDEQRQIQEINTGILIANGADLKRWLSKLTNNNAQGEYYITDIIALAYQEGREIAAVHPARISETDGVNNRLQLSRLERIYQAEQAEKLLLSGVMLRDPARFDLRGTLHCGMDVEIDANVIIEGYVTLGHRVKIGAGCIIKNSVIGDDCEISPYSVVEDAHLEAACTIGPFARLRPGAELLAGAHVGNFVEMKKARLGKGSKAGHLTYLGDAEIGDNVNIGAGTITCNYDGANKFKTVIDDDVFVGSDTQLVAPVTVGKGATIAAGTTVTRNVADNELVLSRVPQVHKQGWQRPVKKK</sequence>
<comment type="function">
    <text evidence="1">Catalyzes the last two sequential reactions in the de novo biosynthetic pathway for UDP-N-acetylglucosamine (UDP-GlcNAc). The C-terminal domain catalyzes the transfer of acetyl group from acetyl coenzyme A to glucosamine-1-phosphate (GlcN-1-P) to produce N-acetylglucosamine-1-phosphate (GlcNAc-1-P), which is converted into UDP-GlcNAc by the transfer of uridine 5-monophosphate (from uridine 5-triphosphate), a reaction catalyzed by the N-terminal domain.</text>
</comment>
<comment type="catalytic activity">
    <reaction evidence="1">
        <text>alpha-D-glucosamine 1-phosphate + acetyl-CoA = N-acetyl-alpha-D-glucosamine 1-phosphate + CoA + H(+)</text>
        <dbReference type="Rhea" id="RHEA:13725"/>
        <dbReference type="ChEBI" id="CHEBI:15378"/>
        <dbReference type="ChEBI" id="CHEBI:57287"/>
        <dbReference type="ChEBI" id="CHEBI:57288"/>
        <dbReference type="ChEBI" id="CHEBI:57776"/>
        <dbReference type="ChEBI" id="CHEBI:58516"/>
        <dbReference type="EC" id="2.3.1.157"/>
    </reaction>
</comment>
<comment type="catalytic activity">
    <reaction evidence="1">
        <text>N-acetyl-alpha-D-glucosamine 1-phosphate + UTP + H(+) = UDP-N-acetyl-alpha-D-glucosamine + diphosphate</text>
        <dbReference type="Rhea" id="RHEA:13509"/>
        <dbReference type="ChEBI" id="CHEBI:15378"/>
        <dbReference type="ChEBI" id="CHEBI:33019"/>
        <dbReference type="ChEBI" id="CHEBI:46398"/>
        <dbReference type="ChEBI" id="CHEBI:57705"/>
        <dbReference type="ChEBI" id="CHEBI:57776"/>
        <dbReference type="EC" id="2.7.7.23"/>
    </reaction>
</comment>
<comment type="cofactor">
    <cofactor evidence="1">
        <name>Mg(2+)</name>
        <dbReference type="ChEBI" id="CHEBI:18420"/>
    </cofactor>
    <text evidence="1">Binds 1 Mg(2+) ion per subunit.</text>
</comment>
<comment type="pathway">
    <text evidence="1">Nucleotide-sugar biosynthesis; UDP-N-acetyl-alpha-D-glucosamine biosynthesis; N-acetyl-alpha-D-glucosamine 1-phosphate from alpha-D-glucosamine 6-phosphate (route II): step 2/2.</text>
</comment>
<comment type="pathway">
    <text evidence="1">Nucleotide-sugar biosynthesis; UDP-N-acetyl-alpha-D-glucosamine biosynthesis; UDP-N-acetyl-alpha-D-glucosamine from N-acetyl-alpha-D-glucosamine 1-phosphate: step 1/1.</text>
</comment>
<comment type="pathway">
    <text evidence="1">Bacterial outer membrane biogenesis; LPS lipid A biosynthesis.</text>
</comment>
<comment type="subunit">
    <text evidence="1">Homotrimer.</text>
</comment>
<comment type="subcellular location">
    <subcellularLocation>
        <location evidence="1">Cytoplasm</location>
    </subcellularLocation>
</comment>
<comment type="similarity">
    <text evidence="1">In the N-terminal section; belongs to the N-acetylglucosamine-1-phosphate uridyltransferase family.</text>
</comment>
<comment type="similarity">
    <text evidence="1">In the C-terminal section; belongs to the transferase hexapeptide repeat family.</text>
</comment>
<gene>
    <name evidence="1" type="primary">glmU</name>
    <name type="ordered locus">SSPA3456</name>
</gene>
<reference key="1">
    <citation type="journal article" date="2009" name="BMC Genomics">
        <title>Pseudogene accumulation in the evolutionary histories of Salmonella enterica serovars Paratyphi A and Typhi.</title>
        <authorList>
            <person name="Holt K.E."/>
            <person name="Thomson N.R."/>
            <person name="Wain J."/>
            <person name="Langridge G.C."/>
            <person name="Hasan R."/>
            <person name="Bhutta Z.A."/>
            <person name="Quail M.A."/>
            <person name="Norbertczak H."/>
            <person name="Walker D."/>
            <person name="Simmonds M."/>
            <person name="White B."/>
            <person name="Bason N."/>
            <person name="Mungall K."/>
            <person name="Dougan G."/>
            <person name="Parkhill J."/>
        </authorList>
    </citation>
    <scope>NUCLEOTIDE SEQUENCE [LARGE SCALE GENOMIC DNA]</scope>
    <source>
        <strain>AKU_12601</strain>
    </source>
</reference>
<keyword id="KW-0012">Acyltransferase</keyword>
<keyword id="KW-0133">Cell shape</keyword>
<keyword id="KW-0961">Cell wall biogenesis/degradation</keyword>
<keyword id="KW-0963">Cytoplasm</keyword>
<keyword id="KW-0460">Magnesium</keyword>
<keyword id="KW-0479">Metal-binding</keyword>
<keyword id="KW-0511">Multifunctional enzyme</keyword>
<keyword id="KW-0548">Nucleotidyltransferase</keyword>
<keyword id="KW-0573">Peptidoglycan synthesis</keyword>
<keyword id="KW-0677">Repeat</keyword>
<keyword id="KW-0808">Transferase</keyword>
<organism>
    <name type="scientific">Salmonella paratyphi A (strain AKU_12601)</name>
    <dbReference type="NCBI Taxonomy" id="554290"/>
    <lineage>
        <taxon>Bacteria</taxon>
        <taxon>Pseudomonadati</taxon>
        <taxon>Pseudomonadota</taxon>
        <taxon>Gammaproteobacteria</taxon>
        <taxon>Enterobacterales</taxon>
        <taxon>Enterobacteriaceae</taxon>
        <taxon>Salmonella</taxon>
    </lineage>
</organism>
<name>GLMU_SALPK</name>
<proteinExistence type="inferred from homology"/>
<feature type="chain" id="PRO_1000186486" description="Bifunctional protein GlmU">
    <location>
        <begin position="1"/>
        <end position="456"/>
    </location>
</feature>
<feature type="region of interest" description="Pyrophosphorylase" evidence="1">
    <location>
        <begin position="1"/>
        <end position="229"/>
    </location>
</feature>
<feature type="region of interest" description="Linker" evidence="1">
    <location>
        <begin position="230"/>
        <end position="250"/>
    </location>
</feature>
<feature type="region of interest" description="N-acetyltransferase" evidence="1">
    <location>
        <begin position="251"/>
        <end position="456"/>
    </location>
</feature>
<feature type="active site" description="Proton acceptor" evidence="1">
    <location>
        <position position="363"/>
    </location>
</feature>
<feature type="binding site" evidence="1">
    <location>
        <begin position="11"/>
        <end position="14"/>
    </location>
    <ligand>
        <name>UDP-N-acetyl-alpha-D-glucosamine</name>
        <dbReference type="ChEBI" id="CHEBI:57705"/>
    </ligand>
</feature>
<feature type="binding site" evidence="1">
    <location>
        <position position="25"/>
    </location>
    <ligand>
        <name>UDP-N-acetyl-alpha-D-glucosamine</name>
        <dbReference type="ChEBI" id="CHEBI:57705"/>
    </ligand>
</feature>
<feature type="binding site" evidence="1">
    <location>
        <position position="76"/>
    </location>
    <ligand>
        <name>UDP-N-acetyl-alpha-D-glucosamine</name>
        <dbReference type="ChEBI" id="CHEBI:57705"/>
    </ligand>
</feature>
<feature type="binding site" evidence="1">
    <location>
        <begin position="81"/>
        <end position="82"/>
    </location>
    <ligand>
        <name>UDP-N-acetyl-alpha-D-glucosamine</name>
        <dbReference type="ChEBI" id="CHEBI:57705"/>
    </ligand>
</feature>
<feature type="binding site" evidence="1">
    <location>
        <begin position="103"/>
        <end position="105"/>
    </location>
    <ligand>
        <name>UDP-N-acetyl-alpha-D-glucosamine</name>
        <dbReference type="ChEBI" id="CHEBI:57705"/>
    </ligand>
</feature>
<feature type="binding site" evidence="1">
    <location>
        <position position="105"/>
    </location>
    <ligand>
        <name>Mg(2+)</name>
        <dbReference type="ChEBI" id="CHEBI:18420"/>
    </ligand>
</feature>
<feature type="binding site" evidence="1">
    <location>
        <position position="140"/>
    </location>
    <ligand>
        <name>UDP-N-acetyl-alpha-D-glucosamine</name>
        <dbReference type="ChEBI" id="CHEBI:57705"/>
    </ligand>
</feature>
<feature type="binding site" evidence="1">
    <location>
        <position position="154"/>
    </location>
    <ligand>
        <name>UDP-N-acetyl-alpha-D-glucosamine</name>
        <dbReference type="ChEBI" id="CHEBI:57705"/>
    </ligand>
</feature>
<feature type="binding site" evidence="1">
    <location>
        <position position="169"/>
    </location>
    <ligand>
        <name>UDP-N-acetyl-alpha-D-glucosamine</name>
        <dbReference type="ChEBI" id="CHEBI:57705"/>
    </ligand>
</feature>
<feature type="binding site" evidence="1">
    <location>
        <position position="227"/>
    </location>
    <ligand>
        <name>Mg(2+)</name>
        <dbReference type="ChEBI" id="CHEBI:18420"/>
    </ligand>
</feature>
<feature type="binding site" evidence="1">
    <location>
        <position position="227"/>
    </location>
    <ligand>
        <name>UDP-N-acetyl-alpha-D-glucosamine</name>
        <dbReference type="ChEBI" id="CHEBI:57705"/>
    </ligand>
</feature>
<feature type="binding site" evidence="1">
    <location>
        <position position="333"/>
    </location>
    <ligand>
        <name>UDP-N-acetyl-alpha-D-glucosamine</name>
        <dbReference type="ChEBI" id="CHEBI:57705"/>
    </ligand>
</feature>
<feature type="binding site" evidence="1">
    <location>
        <position position="351"/>
    </location>
    <ligand>
        <name>UDP-N-acetyl-alpha-D-glucosamine</name>
        <dbReference type="ChEBI" id="CHEBI:57705"/>
    </ligand>
</feature>
<feature type="binding site" evidence="1">
    <location>
        <position position="366"/>
    </location>
    <ligand>
        <name>UDP-N-acetyl-alpha-D-glucosamine</name>
        <dbReference type="ChEBI" id="CHEBI:57705"/>
    </ligand>
</feature>
<feature type="binding site" evidence="1">
    <location>
        <position position="377"/>
    </location>
    <ligand>
        <name>UDP-N-acetyl-alpha-D-glucosamine</name>
        <dbReference type="ChEBI" id="CHEBI:57705"/>
    </ligand>
</feature>
<feature type="binding site" evidence="1">
    <location>
        <position position="380"/>
    </location>
    <ligand>
        <name>acetyl-CoA</name>
        <dbReference type="ChEBI" id="CHEBI:57288"/>
    </ligand>
</feature>
<feature type="binding site" evidence="1">
    <location>
        <begin position="386"/>
        <end position="387"/>
    </location>
    <ligand>
        <name>acetyl-CoA</name>
        <dbReference type="ChEBI" id="CHEBI:57288"/>
    </ligand>
</feature>
<feature type="binding site" evidence="1">
    <location>
        <position position="405"/>
    </location>
    <ligand>
        <name>acetyl-CoA</name>
        <dbReference type="ChEBI" id="CHEBI:57288"/>
    </ligand>
</feature>
<feature type="binding site" evidence="1">
    <location>
        <position position="423"/>
    </location>
    <ligand>
        <name>acetyl-CoA</name>
        <dbReference type="ChEBI" id="CHEBI:57288"/>
    </ligand>
</feature>
<feature type="binding site" evidence="1">
    <location>
        <position position="440"/>
    </location>
    <ligand>
        <name>acetyl-CoA</name>
        <dbReference type="ChEBI" id="CHEBI:57288"/>
    </ligand>
</feature>